<protein>
    <recommendedName>
        <fullName evidence="1">Small ribosomal subunit protein bS18</fullName>
    </recommendedName>
    <alternativeName>
        <fullName evidence="3">30S ribosomal protein S18</fullName>
    </alternativeName>
</protein>
<sequence>MTNQNQSQTQTTQTVEKVSSRQKKKKRVCSFCVERIYDIDYKDVNRLKKFLTERGKIMPRRTTGNCARHQRQLTRAIKRARILALLPFIVE</sequence>
<gene>
    <name evidence="1" type="primary">rpsR</name>
    <name type="ordered locus">Csac_1337</name>
</gene>
<proteinExistence type="inferred from homology"/>
<comment type="function">
    <text evidence="1">Binds as a heterodimer with protein bS6 to the central domain of the 16S rRNA, where it helps stabilize the platform of the 30S subunit.</text>
</comment>
<comment type="subunit">
    <text evidence="1">Part of the 30S ribosomal subunit. Forms a tight heterodimer with protein bS6.</text>
</comment>
<comment type="similarity">
    <text evidence="1">Belongs to the bacterial ribosomal protein bS18 family.</text>
</comment>
<organism>
    <name type="scientific">Caldicellulosiruptor saccharolyticus (strain ATCC 43494 / DSM 8903 / Tp8T 6331)</name>
    <dbReference type="NCBI Taxonomy" id="351627"/>
    <lineage>
        <taxon>Bacteria</taxon>
        <taxon>Bacillati</taxon>
        <taxon>Bacillota</taxon>
        <taxon>Bacillota incertae sedis</taxon>
        <taxon>Caldicellulosiruptorales</taxon>
        <taxon>Caldicellulosiruptoraceae</taxon>
        <taxon>Caldicellulosiruptor</taxon>
    </lineage>
</organism>
<name>RS18_CALS8</name>
<reference key="1">
    <citation type="submission" date="2007-04" db="EMBL/GenBank/DDBJ databases">
        <title>Genome sequence of the thermophilic hydrogen-producing bacterium Caldicellulosiruptor saccharolyticus DSM 8903.</title>
        <authorList>
            <person name="Copeland A."/>
            <person name="Lucas S."/>
            <person name="Lapidus A."/>
            <person name="Barry K."/>
            <person name="Detter J.C."/>
            <person name="Glavina del Rio T."/>
            <person name="Hammon N."/>
            <person name="Israni S."/>
            <person name="Dalin E."/>
            <person name="Tice H."/>
            <person name="Pitluck S."/>
            <person name="Kiss H."/>
            <person name="Brettin T."/>
            <person name="Bruce D."/>
            <person name="Han C."/>
            <person name="Schmutz J."/>
            <person name="Larimer F."/>
            <person name="Land M."/>
            <person name="Hauser L."/>
            <person name="Kyrpides N."/>
            <person name="Lykidis A."/>
            <person name="van de Werken H.J.G."/>
            <person name="Verhaart M.R.A."/>
            <person name="VanFossen A.L."/>
            <person name="Lewis D.L."/>
            <person name="Nichols J.D."/>
            <person name="Goorissen H.P."/>
            <person name="van Niel E.W.J."/>
            <person name="Stams F.J.M."/>
            <person name="Willquist K.U."/>
            <person name="Ward D.E."/>
            <person name="van der Oost J."/>
            <person name="Kelly R.M."/>
            <person name="Kengen S.M.W."/>
            <person name="Richardson P."/>
        </authorList>
    </citation>
    <scope>NUCLEOTIDE SEQUENCE [LARGE SCALE GENOMIC DNA]</scope>
    <source>
        <strain>ATCC 43494 / DSM 8903 / Tp8T 6331</strain>
    </source>
</reference>
<keyword id="KW-0687">Ribonucleoprotein</keyword>
<keyword id="KW-0689">Ribosomal protein</keyword>
<keyword id="KW-0694">RNA-binding</keyword>
<keyword id="KW-0699">rRNA-binding</keyword>
<accession>A4XJ54</accession>
<evidence type="ECO:0000255" key="1">
    <source>
        <dbReference type="HAMAP-Rule" id="MF_00270"/>
    </source>
</evidence>
<evidence type="ECO:0000256" key="2">
    <source>
        <dbReference type="SAM" id="MobiDB-lite"/>
    </source>
</evidence>
<evidence type="ECO:0000305" key="3"/>
<dbReference type="EMBL" id="CP000679">
    <property type="protein sequence ID" value="ABP66939.1"/>
    <property type="molecule type" value="Genomic_DNA"/>
</dbReference>
<dbReference type="RefSeq" id="WP_011916874.1">
    <property type="nucleotide sequence ID" value="NC_009437.1"/>
</dbReference>
<dbReference type="SMR" id="A4XJ54"/>
<dbReference type="STRING" id="351627.Csac_1337"/>
<dbReference type="KEGG" id="csc:Csac_1337"/>
<dbReference type="eggNOG" id="COG0238">
    <property type="taxonomic scope" value="Bacteria"/>
</dbReference>
<dbReference type="HOGENOM" id="CLU_148710_2_2_9"/>
<dbReference type="OrthoDB" id="9812008at2"/>
<dbReference type="Proteomes" id="UP000000256">
    <property type="component" value="Chromosome"/>
</dbReference>
<dbReference type="GO" id="GO:0022627">
    <property type="term" value="C:cytosolic small ribosomal subunit"/>
    <property type="evidence" value="ECO:0007669"/>
    <property type="project" value="TreeGrafter"/>
</dbReference>
<dbReference type="GO" id="GO:0070181">
    <property type="term" value="F:small ribosomal subunit rRNA binding"/>
    <property type="evidence" value="ECO:0007669"/>
    <property type="project" value="TreeGrafter"/>
</dbReference>
<dbReference type="GO" id="GO:0003735">
    <property type="term" value="F:structural constituent of ribosome"/>
    <property type="evidence" value="ECO:0007669"/>
    <property type="project" value="InterPro"/>
</dbReference>
<dbReference type="GO" id="GO:0006412">
    <property type="term" value="P:translation"/>
    <property type="evidence" value="ECO:0007669"/>
    <property type="project" value="UniProtKB-UniRule"/>
</dbReference>
<dbReference type="Gene3D" id="4.10.640.10">
    <property type="entry name" value="Ribosomal protein S18"/>
    <property type="match status" value="1"/>
</dbReference>
<dbReference type="HAMAP" id="MF_00270">
    <property type="entry name" value="Ribosomal_bS18"/>
    <property type="match status" value="1"/>
</dbReference>
<dbReference type="InterPro" id="IPR001648">
    <property type="entry name" value="Ribosomal_bS18"/>
</dbReference>
<dbReference type="InterPro" id="IPR036870">
    <property type="entry name" value="Ribosomal_bS18_sf"/>
</dbReference>
<dbReference type="NCBIfam" id="TIGR00165">
    <property type="entry name" value="S18"/>
    <property type="match status" value="1"/>
</dbReference>
<dbReference type="PANTHER" id="PTHR13479">
    <property type="entry name" value="30S RIBOSOMAL PROTEIN S18"/>
    <property type="match status" value="1"/>
</dbReference>
<dbReference type="PANTHER" id="PTHR13479:SF40">
    <property type="entry name" value="SMALL RIBOSOMAL SUBUNIT PROTEIN BS18M"/>
    <property type="match status" value="1"/>
</dbReference>
<dbReference type="Pfam" id="PF01084">
    <property type="entry name" value="Ribosomal_S18"/>
    <property type="match status" value="1"/>
</dbReference>
<dbReference type="PRINTS" id="PR00974">
    <property type="entry name" value="RIBOSOMALS18"/>
</dbReference>
<dbReference type="SUPFAM" id="SSF46911">
    <property type="entry name" value="Ribosomal protein S18"/>
    <property type="match status" value="1"/>
</dbReference>
<feature type="chain" id="PRO_0000345447" description="Small ribosomal subunit protein bS18">
    <location>
        <begin position="1"/>
        <end position="91"/>
    </location>
</feature>
<feature type="region of interest" description="Disordered" evidence="2">
    <location>
        <begin position="1"/>
        <end position="24"/>
    </location>
</feature>
<feature type="compositionally biased region" description="Low complexity" evidence="2">
    <location>
        <begin position="1"/>
        <end position="14"/>
    </location>
</feature>